<feature type="chain" id="PRO_0000451568" description="Peptidyl-prolyl cis-trans isomerase FKBP35">
    <location>
        <begin position="1"/>
        <end position="304"/>
    </location>
</feature>
<feature type="domain" description="PPIase FKBP-type" evidence="1">
    <location>
        <begin position="37"/>
        <end position="126"/>
    </location>
</feature>
<feature type="repeat" description="TPR 1" evidence="2">
    <location>
        <begin position="144"/>
        <end position="177"/>
    </location>
</feature>
<feature type="repeat" description="TPR 2" evidence="2">
    <location>
        <begin position="194"/>
        <end position="227"/>
    </location>
</feature>
<feature type="repeat" description="TPR 3" evidence="2">
    <location>
        <begin position="228"/>
        <end position="261"/>
    </location>
</feature>
<feature type="mutagenesis site" description="Severe loss of binding to a HSP90 C-terminus peptide (MEEVD)." evidence="6">
    <original>K</original>
    <variation>A</variation>
    <location>
        <position position="148"/>
    </location>
</feature>
<feature type="mutagenesis site" description="Severe loss of binding to a HSP90 C-terminus peptide (MEEVD)." evidence="6">
    <original>N</original>
    <variation>A</variation>
    <location>
        <position position="152"/>
    </location>
</feature>
<feature type="mutagenesis site" description="Severe loss of binding to a HSP90 C-terminus peptide (MEEVD)." evidence="6">
    <original>N</original>
    <variation>A</variation>
    <location>
        <position position="199"/>
    </location>
</feature>
<feature type="mutagenesis site" description="Severe loss of binding to a HSP90 C-terminus peptide (MEEVD)." evidence="6">
    <original>K</original>
    <variation>A</variation>
    <location>
        <position position="229"/>
    </location>
</feature>
<feature type="mutagenesis site" description="Severe loss of binding to a HSP90 C-terminus peptide (MEEVD)." evidence="6">
    <original>K</original>
    <variation>A</variation>
    <location>
        <position position="233"/>
    </location>
</feature>
<feature type="strand" evidence="19">
    <location>
        <begin position="7"/>
        <end position="11"/>
    </location>
</feature>
<feature type="strand" evidence="19">
    <location>
        <begin position="16"/>
        <end position="24"/>
    </location>
</feature>
<feature type="helix" evidence="19">
    <location>
        <begin position="30"/>
        <end position="32"/>
    </location>
</feature>
<feature type="strand" evidence="19">
    <location>
        <begin position="39"/>
        <end position="48"/>
    </location>
</feature>
<feature type="turn" evidence="19">
    <location>
        <begin position="49"/>
        <end position="52"/>
    </location>
</feature>
<feature type="strand" evidence="19">
    <location>
        <begin position="53"/>
        <end position="56"/>
    </location>
</feature>
<feature type="strand" evidence="19">
    <location>
        <begin position="60"/>
        <end position="63"/>
    </location>
</feature>
<feature type="strand" evidence="19">
    <location>
        <begin position="65"/>
        <end position="68"/>
    </location>
</feature>
<feature type="strand" evidence="19">
    <location>
        <begin position="71"/>
        <end position="74"/>
    </location>
</feature>
<feature type="helix" evidence="19">
    <location>
        <begin position="76"/>
        <end position="82"/>
    </location>
</feature>
<feature type="strand" evidence="19">
    <location>
        <begin position="90"/>
        <end position="95"/>
    </location>
</feature>
<feature type="helix" evidence="19">
    <location>
        <begin position="97"/>
        <end position="99"/>
    </location>
</feature>
<feature type="turn" evidence="19">
    <location>
        <begin position="100"/>
        <end position="104"/>
    </location>
</feature>
<feature type="turn" evidence="19">
    <location>
        <begin position="107"/>
        <end position="109"/>
    </location>
</feature>
<feature type="strand" evidence="19">
    <location>
        <begin position="116"/>
        <end position="126"/>
    </location>
</feature>
<feature type="helix" evidence="18">
    <location>
        <begin position="132"/>
        <end position="134"/>
    </location>
</feature>
<feature type="helix" evidence="18">
    <location>
        <begin position="137"/>
        <end position="156"/>
    </location>
</feature>
<feature type="helix" evidence="18">
    <location>
        <begin position="160"/>
        <end position="172"/>
    </location>
</feature>
<feature type="turn" evidence="18">
    <location>
        <begin position="173"/>
        <end position="176"/>
    </location>
</feature>
<feature type="helix" evidence="18">
    <location>
        <begin position="183"/>
        <end position="206"/>
    </location>
</feature>
<feature type="helix" evidence="18">
    <location>
        <begin position="210"/>
        <end position="223"/>
    </location>
</feature>
<feature type="helix" evidence="18">
    <location>
        <begin position="228"/>
        <end position="241"/>
    </location>
</feature>
<feature type="helix" evidence="18">
    <location>
        <begin position="244"/>
        <end position="257"/>
    </location>
</feature>
<feature type="helix" evidence="18">
    <location>
        <begin position="262"/>
        <end position="279"/>
    </location>
</feature>
<gene>
    <name evidence="8" type="primary">FKBP35</name>
    <name evidence="10" type="ORF">PF3D7_1247400</name>
</gene>
<proteinExistence type="evidence at protein level"/>
<name>FKB35_PLAF7</name>
<keyword id="KW-0002">3D-structure</keyword>
<keyword id="KW-0143">Chaperone</keyword>
<keyword id="KW-0963">Cytoplasm</keyword>
<keyword id="KW-0413">Isomerase</keyword>
<keyword id="KW-0539">Nucleus</keyword>
<keyword id="KW-1185">Reference proteome</keyword>
<keyword id="KW-0677">Repeat</keyword>
<keyword id="KW-0697">Rotamase</keyword>
<keyword id="KW-0802">TPR repeat</keyword>
<comment type="function">
    <text evidence="3 4 5 7">Has peptidylprolyl isomerase (PPIase) and co-chaperone activities (PubMed:15664653, PubMed:15850699). Assists protein folding by catalyzing the peptidyl conversion of cis and trans rotamers of the prolyl amide bond of protein substrates (PubMed:15664653, PubMed:15850699, PubMed:23974147). Inhibits calcineurin phosphatase activity in vitro (PubMed:15850699, PubMed:17289400, PubMed:23974147). Plays an essential role in merozoite egress from host erythrocytes (PubMed:15664653, PubMed:23974147).</text>
</comment>
<comment type="catalytic activity">
    <reaction evidence="1 3 4 7">
        <text>[protein]-peptidylproline (omega=180) = [protein]-peptidylproline (omega=0)</text>
        <dbReference type="Rhea" id="RHEA:16237"/>
        <dbReference type="Rhea" id="RHEA-COMP:10747"/>
        <dbReference type="Rhea" id="RHEA-COMP:10748"/>
        <dbReference type="ChEBI" id="CHEBI:83833"/>
        <dbReference type="ChEBI" id="CHEBI:83834"/>
        <dbReference type="EC" id="5.2.1.8"/>
    </reaction>
</comment>
<comment type="activity regulation">
    <text evidence="3 4 7">Inhibited by FK506 and its derivates, such as ascomycin, and rapamycin (PubMed:15664653, PubMed:15850699). FK506 and rapamycin inhibit peptidylprolyl isomerase activity but not chaperone activity (PubMed:15664653). Inhibited by N-(2-ethyl-phenyl)-2-(3H-imidazao [4, 5-b] pyridin-2-yl-sulfanyl)-acetamide (D44) (PubMed:23974147). Not inhibited by cyclosporin A (PubMed:15664653, PubMed:15850699). Inhibition of calcineurin phosphatase activity is enhanced by FK506 (PubMed:15850699).</text>
</comment>
<comment type="subunit">
    <text evidence="4 5 6">Homodimer (PubMed:17289400). Interacts (via TPR repeats) with HSP90 (probably via MEEVD motif) (PubMed:15850699, PubMed:19691130).</text>
</comment>
<comment type="subcellular location">
    <subcellularLocation>
        <location evidence="4">Cytoplasm</location>
    </subcellularLocation>
    <subcellularLocation>
        <location evidence="4">Nucleus</location>
    </subcellularLocation>
    <text evidence="4">During the asexual blood stage, predominantly localizes to the cytoplasm of ring stage parasites and then translocates to the nucleus during the differentiation into trophozoites and schizonts.</text>
</comment>
<comment type="developmental stage">
    <text evidence="4">Expressed during all parasite blood stages (at protein level).</text>
</comment>
<comment type="domain">
    <text evidence="3 4">The PPIase FKBP-type domain contributes to the chaperone activity (PubMed:15664653). Required for the inhibition of calcineurin phosphatase activity (PubMed:15850699).</text>
</comment>
<comment type="domain">
    <text evidence="3 4">The TPR repeats are important for the chaperone activity (PubMed:15664653). In another study, these repeats appear to be dispensable for chaperone activity (PubMed:15850699). Dispensable for PPIase activity (PubMed:15850699). Dispensable for the inhibition of calcineurin phosphatase activity (PubMed:15850699).</text>
</comment>
<comment type="similarity">
    <text evidence="9">Belongs to the FKBP-type PPIase family.</text>
</comment>
<organism evidence="11">
    <name type="scientific">Plasmodium falciparum (isolate 3D7)</name>
    <dbReference type="NCBI Taxonomy" id="36329"/>
    <lineage>
        <taxon>Eukaryota</taxon>
        <taxon>Sar</taxon>
        <taxon>Alveolata</taxon>
        <taxon>Apicomplexa</taxon>
        <taxon>Aconoidasida</taxon>
        <taxon>Haemosporida</taxon>
        <taxon>Plasmodiidae</taxon>
        <taxon>Plasmodium</taxon>
        <taxon>Plasmodium (Laverania)</taxon>
    </lineage>
</organism>
<accession>Q8I4V8</accession>
<protein>
    <recommendedName>
        <fullName evidence="9">Peptidyl-prolyl cis-trans isomerase FKBP35</fullName>
        <ecNumber evidence="1 3 4 7">5.2.1.8</ecNumber>
    </recommendedName>
    <alternativeName>
        <fullName evidence="8">PfFKBP35</fullName>
    </alternativeName>
</protein>
<reference evidence="11" key="1">
    <citation type="journal article" date="2002" name="Nature">
        <title>Genome sequence of the human malaria parasite Plasmodium falciparum.</title>
        <authorList>
            <person name="Gardner M.J."/>
            <person name="Hall N."/>
            <person name="Fung E."/>
            <person name="White O."/>
            <person name="Berriman M."/>
            <person name="Hyman R.W."/>
            <person name="Carlton J.M."/>
            <person name="Pain A."/>
            <person name="Nelson K.E."/>
            <person name="Bowman S."/>
            <person name="Paulsen I.T."/>
            <person name="James K.D."/>
            <person name="Eisen J.A."/>
            <person name="Rutherford K.M."/>
            <person name="Salzberg S.L."/>
            <person name="Craig A."/>
            <person name="Kyes S."/>
            <person name="Chan M.-S."/>
            <person name="Nene V."/>
            <person name="Shallom S.J."/>
            <person name="Suh B."/>
            <person name="Peterson J."/>
            <person name="Angiuoli S."/>
            <person name="Pertea M."/>
            <person name="Allen J."/>
            <person name="Selengut J."/>
            <person name="Haft D."/>
            <person name="Mather M.W."/>
            <person name="Vaidya A.B."/>
            <person name="Martin D.M.A."/>
            <person name="Fairlamb A.H."/>
            <person name="Fraunholz M.J."/>
            <person name="Roos D.S."/>
            <person name="Ralph S.A."/>
            <person name="McFadden G.I."/>
            <person name="Cummings L.M."/>
            <person name="Subramanian G.M."/>
            <person name="Mungall C."/>
            <person name="Venter J.C."/>
            <person name="Carucci D.J."/>
            <person name="Hoffman S.L."/>
            <person name="Newbold C."/>
            <person name="Davis R.W."/>
            <person name="Fraser C.M."/>
            <person name="Barrell B.G."/>
        </authorList>
    </citation>
    <scope>NUCLEOTIDE SEQUENCE [LARGE SCALE GENOMIC DNA]</scope>
    <source>
        <strain evidence="11">3D7</strain>
    </source>
</reference>
<reference evidence="9" key="2">
    <citation type="journal article" date="2005" name="Mol. Biochem. Parasitol.">
        <title>A Plasmodium falciparum FK506-binding protein (FKBP) with peptidyl-prolyl cis-trans isomerase and chaperone activities.</title>
        <authorList>
            <person name="Monaghan P."/>
            <person name="Bell A."/>
        </authorList>
    </citation>
    <scope>FUNCTION</scope>
    <scope>CATALYTIC ACTIVITY</scope>
    <scope>ACTIVITY REGULATION</scope>
    <scope>DOMAIN</scope>
</reference>
<reference evidence="9" key="3">
    <citation type="journal article" date="2005" name="Mol. Biochem. Parasitol.">
        <title>The FK506-binding protein of the malaria parasite, Plasmodium falciparum, is a FK506-sensitive chaperone with FK506-independent calcineurin-inhibitory activity.</title>
        <authorList>
            <person name="Kumar R."/>
            <person name="Adams B."/>
            <person name="Musiyenko A."/>
            <person name="Shulyayeva O."/>
            <person name="Barik S."/>
        </authorList>
    </citation>
    <scope>FUNCTION</scope>
    <scope>CATALYTIC ACTIVITY</scope>
    <scope>ACTIVITY REGULATION</scope>
    <scope>INTERACTION WITH HSP90</scope>
    <scope>SUBCELLULAR LOCATION</scope>
    <scope>DEVELOPMENTAL STAGE</scope>
    <scope>DOMAIN</scope>
</reference>
<reference evidence="9" key="4">
    <citation type="journal article" date="2007" name="Protein Expr. Purif.">
        <title>Expression, purification, and molecular characterization of Plasmodium falciparum FK506-binding protein 35 (PfFKBP35).</title>
        <authorList>
            <person name="Yoon H.R."/>
            <person name="Kang C.B."/>
            <person name="Chia J."/>
            <person name="Tang K."/>
            <person name="Yoon H.S."/>
        </authorList>
    </citation>
    <scope>FUNCTION</scope>
    <scope>SUBUNIT</scope>
</reference>
<reference evidence="14" key="5">
    <citation type="journal article" date="2008" name="Biochemistry">
        <title>Crystal structure of the FK506 binding domain of Plasmodium falciparum FKBP35 in complex with FK506.</title>
        <authorList>
            <person name="Kotaka M."/>
            <person name="Ye H."/>
            <person name="Alag R."/>
            <person name="Hu G."/>
            <person name="Bozdech Z."/>
            <person name="Preiser P.R."/>
            <person name="Yoon H.S."/>
            <person name="Lescar J."/>
        </authorList>
    </citation>
    <scope>X-RAY CRYSTALLOGRAPHY (2.35 ANGSTROMS) OF 1-127 IN COMPLEX WITH INHIBITOR FK506</scope>
</reference>
<reference evidence="13" key="6">
    <citation type="journal article" date="2008" name="Proteins">
        <title>Solution structure of FK506 binding domain (FKBD) of Plasmodium falciparum FK506 binding protein 35 (PfFKBP35).</title>
        <authorList>
            <person name="Kang C.B."/>
            <person name="Ye H."/>
            <person name="Yoon H.R."/>
            <person name="Yoon H.S."/>
        </authorList>
    </citation>
    <scope>STRUCTURE BY NMR OF 1-127</scope>
</reference>
<reference evidence="12" key="7">
    <citation type="journal article" date="2009" name="Protein Sci.">
        <title>Crystallographic structure of the tetratricopeptide repeat domain of Plasmodium falciparum FKBP35 and its molecular interaction with Hsp90 C-terminal pentapeptide.</title>
        <authorList>
            <person name="Alag R."/>
            <person name="Bharatham N."/>
            <person name="Dong A."/>
            <person name="Hills T."/>
            <person name="Harikishore A."/>
            <person name="Widjaja A.A."/>
            <person name="Shochat S.G."/>
            <person name="Hui R."/>
            <person name="Yoon H.S."/>
        </authorList>
    </citation>
    <scope>X-RAY CRYSTALLOGRAPHY (1.63 ANGSTROMS) OF 128-304</scope>
    <scope>INTERACTION WITH HSP90</scope>
    <scope>MUTAGENESIS OF LYS-148; ASN-152; ASN-199; LYS-229 AND LYS-233</scope>
</reference>
<reference evidence="15" key="8">
    <citation type="journal article" date="2013" name="Sci. Rep.">
        <title>Small molecule Plasmodium FKBP35 inhibitor as a potential antimalaria agent.</title>
        <authorList>
            <person name="Harikishore A."/>
            <person name="Niang M."/>
            <person name="Rajan S."/>
            <person name="Preiser P.R."/>
            <person name="Yoon H.S."/>
        </authorList>
    </citation>
    <scope>X-RAY CRYSTALLOGRAPHY (2.75 ANGSTROMS) OF 1-127 WITH INHIBITOR D44</scope>
    <scope>FUNCTION</scope>
    <scope>CATALYTIC ACTIVITY</scope>
    <scope>ACTIVITY REGULATION</scope>
</reference>
<reference evidence="16 17" key="9">
    <citation type="journal article" date="2015" name="Acta Crystallogr. D">
        <title>Two crystal structures of the FK506-binding domain of Plasmodium falciparum FKBP35 in complex with rapamycin at high resolution.</title>
        <authorList>
            <person name="Bianchin A."/>
            <person name="Allemand F."/>
            <person name="Bell A."/>
            <person name="Chubb A.J."/>
            <person name="Guichou J.F."/>
        </authorList>
    </citation>
    <scope>X-RAY CRYSTALLOGRAPHY (1.40 ANGSTROMS) OF 5-127 IN COMPLEX WITH INHIBITOR RAPAMYCIN</scope>
</reference>
<dbReference type="EC" id="5.2.1.8" evidence="1 3 4 7"/>
<dbReference type="EMBL" id="LN999947">
    <property type="protein sequence ID" value="CZT99629.1"/>
    <property type="molecule type" value="Genomic_DNA"/>
</dbReference>
<dbReference type="RefSeq" id="XP_001350859.1">
    <property type="nucleotide sequence ID" value="XM_001350823.1"/>
</dbReference>
<dbReference type="PDB" id="2FBN">
    <property type="method" value="X-ray"/>
    <property type="resolution" value="1.63 A"/>
    <property type="chains" value="A/B=128-304"/>
</dbReference>
<dbReference type="PDB" id="2OFN">
    <property type="method" value="NMR"/>
    <property type="chains" value="A=1-127"/>
</dbReference>
<dbReference type="PDB" id="2VN1">
    <property type="method" value="X-ray"/>
    <property type="resolution" value="2.35 A"/>
    <property type="chains" value="A/B=1-127"/>
</dbReference>
<dbReference type="PDB" id="4J4N">
    <property type="method" value="X-ray"/>
    <property type="resolution" value="2.75 A"/>
    <property type="chains" value="A/B/C=1-127"/>
</dbReference>
<dbReference type="PDB" id="4QT2">
    <property type="method" value="X-ray"/>
    <property type="resolution" value="1.44 A"/>
    <property type="chains" value="A=7-127"/>
</dbReference>
<dbReference type="PDB" id="4QT3">
    <property type="method" value="X-ray"/>
    <property type="resolution" value="1.40 A"/>
    <property type="chains" value="A=5-127"/>
</dbReference>
<dbReference type="PDBsum" id="2FBN"/>
<dbReference type="PDBsum" id="2OFN"/>
<dbReference type="PDBsum" id="2VN1"/>
<dbReference type="PDBsum" id="4J4N"/>
<dbReference type="PDBsum" id="4QT2"/>
<dbReference type="PDBsum" id="4QT3"/>
<dbReference type="SMR" id="Q8I4V8"/>
<dbReference type="FunCoup" id="Q8I4V8">
    <property type="interactions" value="310"/>
</dbReference>
<dbReference type="STRING" id="36329.Q8I4V8"/>
<dbReference type="PaxDb" id="5833-PFL2275c"/>
<dbReference type="EnsemblProtists" id="CZT99629">
    <property type="protein sequence ID" value="CZT99629"/>
    <property type="gene ID" value="PF3D7_1247400"/>
</dbReference>
<dbReference type="GeneID" id="811507"/>
<dbReference type="KEGG" id="pfa:PF3D7_1247400"/>
<dbReference type="VEuPathDB" id="PlasmoDB:PF3D7_1247400"/>
<dbReference type="HOGENOM" id="CLU_013615_13_0_1"/>
<dbReference type="InParanoid" id="Q8I4V8"/>
<dbReference type="OMA" id="ICVASMK"/>
<dbReference type="OrthoDB" id="1902587at2759"/>
<dbReference type="PhylomeDB" id="Q8I4V8"/>
<dbReference type="Reactome" id="R-PFA-3371497">
    <property type="pathway name" value="HSP90 chaperone cycle for steroid hormone receptors (SHR) in the presence of ligand"/>
</dbReference>
<dbReference type="EvolutionaryTrace" id="Q8I4V8"/>
<dbReference type="Proteomes" id="UP000001450">
    <property type="component" value="Chromosome 12"/>
</dbReference>
<dbReference type="GO" id="GO:0005737">
    <property type="term" value="C:cytoplasm"/>
    <property type="evidence" value="ECO:0000314"/>
    <property type="project" value="GeneDB"/>
</dbReference>
<dbReference type="GO" id="GO:0005634">
    <property type="term" value="C:nucleus"/>
    <property type="evidence" value="ECO:0000314"/>
    <property type="project" value="GeneDB"/>
</dbReference>
<dbReference type="GO" id="GO:0005528">
    <property type="term" value="F:FK506 binding"/>
    <property type="evidence" value="ECO:0000314"/>
    <property type="project" value="GeneDB"/>
</dbReference>
<dbReference type="GO" id="GO:0003755">
    <property type="term" value="F:peptidyl-prolyl cis-trans isomerase activity"/>
    <property type="evidence" value="ECO:0000314"/>
    <property type="project" value="UniProtKB"/>
</dbReference>
<dbReference type="GO" id="GO:0046983">
    <property type="term" value="F:protein dimerization activity"/>
    <property type="evidence" value="ECO:0000304"/>
    <property type="project" value="GeneDB"/>
</dbReference>
<dbReference type="GO" id="GO:0061077">
    <property type="term" value="P:chaperone-mediated protein folding"/>
    <property type="evidence" value="ECO:0000318"/>
    <property type="project" value="GO_Central"/>
</dbReference>
<dbReference type="GO" id="GO:0006457">
    <property type="term" value="P:protein folding"/>
    <property type="evidence" value="ECO:0000314"/>
    <property type="project" value="GeneDB"/>
</dbReference>
<dbReference type="GO" id="GO:0000413">
    <property type="term" value="P:protein peptidyl-prolyl isomerization"/>
    <property type="evidence" value="ECO:0000314"/>
    <property type="project" value="UniProtKB"/>
</dbReference>
<dbReference type="FunFam" id="1.25.40.10:FF:000514">
    <property type="entry name" value="Peptidylprolyl isomerase"/>
    <property type="match status" value="1"/>
</dbReference>
<dbReference type="FunFam" id="3.10.50.40:FF:000043">
    <property type="entry name" value="Peptidylprolyl isomerase"/>
    <property type="match status" value="1"/>
</dbReference>
<dbReference type="Gene3D" id="3.10.50.40">
    <property type="match status" value="1"/>
</dbReference>
<dbReference type="Gene3D" id="1.25.40.10">
    <property type="entry name" value="Tetratricopeptide repeat domain"/>
    <property type="match status" value="1"/>
</dbReference>
<dbReference type="InterPro" id="IPR050754">
    <property type="entry name" value="FKBP4/5/8-like"/>
</dbReference>
<dbReference type="InterPro" id="IPR046357">
    <property type="entry name" value="PPIase_dom_sf"/>
</dbReference>
<dbReference type="InterPro" id="IPR001179">
    <property type="entry name" value="PPIase_FKBP_dom"/>
</dbReference>
<dbReference type="InterPro" id="IPR011990">
    <property type="entry name" value="TPR-like_helical_dom_sf"/>
</dbReference>
<dbReference type="InterPro" id="IPR019734">
    <property type="entry name" value="TPR_rpt"/>
</dbReference>
<dbReference type="PANTHER" id="PTHR46512">
    <property type="entry name" value="PEPTIDYLPROLYL ISOMERASE"/>
    <property type="match status" value="1"/>
</dbReference>
<dbReference type="PANTHER" id="PTHR46512:SF9">
    <property type="entry name" value="PEPTIDYLPROLYL ISOMERASE"/>
    <property type="match status" value="1"/>
</dbReference>
<dbReference type="Pfam" id="PF00254">
    <property type="entry name" value="FKBP_C"/>
    <property type="match status" value="1"/>
</dbReference>
<dbReference type="SMART" id="SM00028">
    <property type="entry name" value="TPR"/>
    <property type="match status" value="3"/>
</dbReference>
<dbReference type="SUPFAM" id="SSF54534">
    <property type="entry name" value="FKBP-like"/>
    <property type="match status" value="1"/>
</dbReference>
<dbReference type="SUPFAM" id="SSF48452">
    <property type="entry name" value="TPR-like"/>
    <property type="match status" value="1"/>
</dbReference>
<dbReference type="PROSITE" id="PS50059">
    <property type="entry name" value="FKBP_PPIASE"/>
    <property type="match status" value="1"/>
</dbReference>
<dbReference type="PROSITE" id="PS50005">
    <property type="entry name" value="TPR"/>
    <property type="match status" value="3"/>
</dbReference>
<dbReference type="PROSITE" id="PS50293">
    <property type="entry name" value="TPR_REGION"/>
    <property type="match status" value="1"/>
</dbReference>
<sequence length="304" mass="34827">MTTEQEFEKVELTADGGVIKTILKKGDEGEENIPKKGNEVTVHYVGKLESTGKVFDSSFDRNVPFKFHLEQGEVIKGWDICVSSMRKNEKCLVRIESMYGYGDEGCGESIPGNSVLLFEIELLSFREAKKSIYDYTDEEKVQSAFDIKEEGNEFFKKNEINEAIVKYKEALDFFIHTEEWDDQILLDKKKNIEISCNLNLATCYNKNKDYPKAIDHASKVLKIDKNNVKALYKLGVANMYFGFLEEAKENLYKAASLNPNNLDIRNSYELCVNKLKEARKKDKLTFGGMFDKGPLYEEKKNSAN</sequence>
<evidence type="ECO:0000255" key="1">
    <source>
        <dbReference type="PROSITE-ProRule" id="PRU00277"/>
    </source>
</evidence>
<evidence type="ECO:0000255" key="2">
    <source>
        <dbReference type="PROSITE-ProRule" id="PRU00339"/>
    </source>
</evidence>
<evidence type="ECO:0000269" key="3">
    <source>
    </source>
</evidence>
<evidence type="ECO:0000269" key="4">
    <source>
    </source>
</evidence>
<evidence type="ECO:0000269" key="5">
    <source>
    </source>
</evidence>
<evidence type="ECO:0000269" key="6">
    <source>
    </source>
</evidence>
<evidence type="ECO:0000269" key="7">
    <source>
    </source>
</evidence>
<evidence type="ECO:0000303" key="8">
    <source>
    </source>
</evidence>
<evidence type="ECO:0000305" key="9"/>
<evidence type="ECO:0000312" key="10">
    <source>
        <dbReference type="EMBL" id="CZT99629.1"/>
    </source>
</evidence>
<evidence type="ECO:0000312" key="11">
    <source>
        <dbReference type="Proteomes" id="UP000001450"/>
    </source>
</evidence>
<evidence type="ECO:0007744" key="12">
    <source>
        <dbReference type="PDB" id="2FBN"/>
    </source>
</evidence>
<evidence type="ECO:0007744" key="13">
    <source>
        <dbReference type="PDB" id="2OFN"/>
    </source>
</evidence>
<evidence type="ECO:0007744" key="14">
    <source>
        <dbReference type="PDB" id="2VN1"/>
    </source>
</evidence>
<evidence type="ECO:0007744" key="15">
    <source>
        <dbReference type="PDB" id="4J4N"/>
    </source>
</evidence>
<evidence type="ECO:0007744" key="16">
    <source>
        <dbReference type="PDB" id="4QT2"/>
    </source>
</evidence>
<evidence type="ECO:0007744" key="17">
    <source>
        <dbReference type="PDB" id="4QT3"/>
    </source>
</evidence>
<evidence type="ECO:0007829" key="18">
    <source>
        <dbReference type="PDB" id="2FBN"/>
    </source>
</evidence>
<evidence type="ECO:0007829" key="19">
    <source>
        <dbReference type="PDB" id="4QT3"/>
    </source>
</evidence>